<protein>
    <recommendedName>
        <fullName evidence="1">Elongation factor G 1</fullName>
        <shortName evidence="1">EF-G 1</shortName>
    </recommendedName>
</protein>
<reference key="1">
    <citation type="journal article" date="2004" name="Nucleic Acids Res.">
        <title>Comparative analysis of the Borrelia garinii genome.</title>
        <authorList>
            <person name="Gloeckner G."/>
            <person name="Lehmann R."/>
            <person name="Romualdi A."/>
            <person name="Pradella S."/>
            <person name="Schulte-Spechtel U."/>
            <person name="Schilhabel M."/>
            <person name="Wilske B."/>
            <person name="Suehnel J."/>
            <person name="Platzer M."/>
        </authorList>
    </citation>
    <scope>NUCLEOTIDE SEQUENCE [LARGE SCALE GENOMIC DNA]</scope>
    <source>
        <strain>ATCC BAA-2496 / DSM 23469 / PBi</strain>
    </source>
</reference>
<comment type="function">
    <text evidence="1">Catalyzes the GTP-dependent ribosomal translocation step during translation elongation. During this step, the ribosome changes from the pre-translocational (PRE) to the post-translocational (POST) state as the newly formed A-site-bound peptidyl-tRNA and P-site-bound deacylated tRNA move to the P and E sites, respectively. Catalyzes the coordinated movement of the two tRNA molecules, the mRNA and conformational changes in the ribosome.</text>
</comment>
<comment type="subcellular location">
    <subcellularLocation>
        <location evidence="1">Cytoplasm</location>
    </subcellularLocation>
</comment>
<comment type="similarity">
    <text evidence="1">Belongs to the TRAFAC class translation factor GTPase superfamily. Classic translation factor GTPase family. EF-G/EF-2 subfamily.</text>
</comment>
<organism>
    <name type="scientific">Borrelia garinii subsp. bavariensis (strain ATCC BAA-2496 / DSM 23469 / PBi)</name>
    <name type="common">Borreliella bavariensis</name>
    <dbReference type="NCBI Taxonomy" id="290434"/>
    <lineage>
        <taxon>Bacteria</taxon>
        <taxon>Pseudomonadati</taxon>
        <taxon>Spirochaetota</taxon>
        <taxon>Spirochaetia</taxon>
        <taxon>Spirochaetales</taxon>
        <taxon>Borreliaceae</taxon>
        <taxon>Borreliella</taxon>
    </lineage>
</organism>
<keyword id="KW-0963">Cytoplasm</keyword>
<keyword id="KW-0251">Elongation factor</keyword>
<keyword id="KW-0342">GTP-binding</keyword>
<keyword id="KW-0547">Nucleotide-binding</keyword>
<keyword id="KW-0648">Protein biosynthesis</keyword>
<accession>Q660Y4</accession>
<dbReference type="EMBL" id="CP000013">
    <property type="protein sequence ID" value="AAU07387.1"/>
    <property type="molecule type" value="Genomic_DNA"/>
</dbReference>
<dbReference type="SMR" id="Q660Y4"/>
<dbReference type="GeneID" id="45161331"/>
<dbReference type="KEGG" id="bga:BG0550"/>
<dbReference type="eggNOG" id="COG0480">
    <property type="taxonomic scope" value="Bacteria"/>
</dbReference>
<dbReference type="HOGENOM" id="CLU_002794_4_0_12"/>
<dbReference type="OrthoDB" id="9804431at2"/>
<dbReference type="Proteomes" id="UP000002276">
    <property type="component" value="Chromosome"/>
</dbReference>
<dbReference type="GO" id="GO:0005737">
    <property type="term" value="C:cytoplasm"/>
    <property type="evidence" value="ECO:0007669"/>
    <property type="project" value="UniProtKB-SubCell"/>
</dbReference>
<dbReference type="GO" id="GO:0005525">
    <property type="term" value="F:GTP binding"/>
    <property type="evidence" value="ECO:0007669"/>
    <property type="project" value="UniProtKB-UniRule"/>
</dbReference>
<dbReference type="GO" id="GO:0003924">
    <property type="term" value="F:GTPase activity"/>
    <property type="evidence" value="ECO:0007669"/>
    <property type="project" value="InterPro"/>
</dbReference>
<dbReference type="GO" id="GO:0003746">
    <property type="term" value="F:translation elongation factor activity"/>
    <property type="evidence" value="ECO:0007669"/>
    <property type="project" value="UniProtKB-UniRule"/>
</dbReference>
<dbReference type="CDD" id="cd01886">
    <property type="entry name" value="EF-G"/>
    <property type="match status" value="1"/>
</dbReference>
<dbReference type="CDD" id="cd16262">
    <property type="entry name" value="EFG_III"/>
    <property type="match status" value="1"/>
</dbReference>
<dbReference type="CDD" id="cd01434">
    <property type="entry name" value="EFG_mtEFG1_IV"/>
    <property type="match status" value="1"/>
</dbReference>
<dbReference type="CDD" id="cd04091">
    <property type="entry name" value="mtEFG1_II_like"/>
    <property type="match status" value="1"/>
</dbReference>
<dbReference type="FunFam" id="3.30.230.10:FF:000003">
    <property type="entry name" value="Elongation factor G"/>
    <property type="match status" value="1"/>
</dbReference>
<dbReference type="FunFam" id="3.30.70.240:FF:000001">
    <property type="entry name" value="Elongation factor G"/>
    <property type="match status" value="1"/>
</dbReference>
<dbReference type="FunFam" id="3.30.70.870:FF:000001">
    <property type="entry name" value="Elongation factor G"/>
    <property type="match status" value="1"/>
</dbReference>
<dbReference type="FunFam" id="3.40.50.300:FF:000029">
    <property type="entry name" value="Elongation factor G"/>
    <property type="match status" value="1"/>
</dbReference>
<dbReference type="FunFam" id="2.40.30.10:FF:000022">
    <property type="entry name" value="Elongation factor G, mitochondrial"/>
    <property type="match status" value="1"/>
</dbReference>
<dbReference type="Gene3D" id="3.30.230.10">
    <property type="match status" value="1"/>
</dbReference>
<dbReference type="Gene3D" id="3.30.70.240">
    <property type="match status" value="1"/>
</dbReference>
<dbReference type="Gene3D" id="3.30.70.870">
    <property type="entry name" value="Elongation Factor G (Translational Gtpase), domain 3"/>
    <property type="match status" value="1"/>
</dbReference>
<dbReference type="Gene3D" id="3.40.50.300">
    <property type="entry name" value="P-loop containing nucleotide triphosphate hydrolases"/>
    <property type="match status" value="1"/>
</dbReference>
<dbReference type="Gene3D" id="2.40.30.10">
    <property type="entry name" value="Translation factors"/>
    <property type="match status" value="1"/>
</dbReference>
<dbReference type="HAMAP" id="MF_00054_B">
    <property type="entry name" value="EF_G_EF_2_B"/>
    <property type="match status" value="1"/>
</dbReference>
<dbReference type="InterPro" id="IPR041095">
    <property type="entry name" value="EFG_II"/>
</dbReference>
<dbReference type="InterPro" id="IPR009022">
    <property type="entry name" value="EFG_III"/>
</dbReference>
<dbReference type="InterPro" id="IPR035647">
    <property type="entry name" value="EFG_III/V"/>
</dbReference>
<dbReference type="InterPro" id="IPR047872">
    <property type="entry name" value="EFG_IV"/>
</dbReference>
<dbReference type="InterPro" id="IPR000640">
    <property type="entry name" value="EFG_V-like"/>
</dbReference>
<dbReference type="InterPro" id="IPR004161">
    <property type="entry name" value="EFTu-like_2"/>
</dbReference>
<dbReference type="InterPro" id="IPR031157">
    <property type="entry name" value="G_TR_CS"/>
</dbReference>
<dbReference type="InterPro" id="IPR027417">
    <property type="entry name" value="P-loop_NTPase"/>
</dbReference>
<dbReference type="InterPro" id="IPR020568">
    <property type="entry name" value="Ribosomal_Su5_D2-typ_SF"/>
</dbReference>
<dbReference type="InterPro" id="IPR014721">
    <property type="entry name" value="Ribsml_uS5_D2-typ_fold_subgr"/>
</dbReference>
<dbReference type="InterPro" id="IPR005225">
    <property type="entry name" value="Small_GTP-bd"/>
</dbReference>
<dbReference type="InterPro" id="IPR000795">
    <property type="entry name" value="T_Tr_GTP-bd_dom"/>
</dbReference>
<dbReference type="InterPro" id="IPR009000">
    <property type="entry name" value="Transl_B-barrel_sf"/>
</dbReference>
<dbReference type="InterPro" id="IPR004540">
    <property type="entry name" value="Transl_elong_EFG/EF2"/>
</dbReference>
<dbReference type="InterPro" id="IPR005517">
    <property type="entry name" value="Transl_elong_EFG/EF2_IV"/>
</dbReference>
<dbReference type="NCBIfam" id="TIGR00484">
    <property type="entry name" value="EF-G"/>
    <property type="match status" value="1"/>
</dbReference>
<dbReference type="NCBIfam" id="NF009381">
    <property type="entry name" value="PRK12740.1-5"/>
    <property type="match status" value="1"/>
</dbReference>
<dbReference type="NCBIfam" id="TIGR00231">
    <property type="entry name" value="small_GTP"/>
    <property type="match status" value="1"/>
</dbReference>
<dbReference type="PANTHER" id="PTHR43636">
    <property type="entry name" value="ELONGATION FACTOR G, MITOCHONDRIAL"/>
    <property type="match status" value="1"/>
</dbReference>
<dbReference type="PANTHER" id="PTHR43636:SF2">
    <property type="entry name" value="ELONGATION FACTOR G, MITOCHONDRIAL"/>
    <property type="match status" value="1"/>
</dbReference>
<dbReference type="Pfam" id="PF00679">
    <property type="entry name" value="EFG_C"/>
    <property type="match status" value="1"/>
</dbReference>
<dbReference type="Pfam" id="PF14492">
    <property type="entry name" value="EFG_III"/>
    <property type="match status" value="1"/>
</dbReference>
<dbReference type="Pfam" id="PF03764">
    <property type="entry name" value="EFG_IV"/>
    <property type="match status" value="1"/>
</dbReference>
<dbReference type="Pfam" id="PF00009">
    <property type="entry name" value="GTP_EFTU"/>
    <property type="match status" value="1"/>
</dbReference>
<dbReference type="Pfam" id="PF03144">
    <property type="entry name" value="GTP_EFTU_D2"/>
    <property type="match status" value="1"/>
</dbReference>
<dbReference type="PRINTS" id="PR00315">
    <property type="entry name" value="ELONGATNFCT"/>
</dbReference>
<dbReference type="SMART" id="SM00838">
    <property type="entry name" value="EFG_C"/>
    <property type="match status" value="1"/>
</dbReference>
<dbReference type="SMART" id="SM00889">
    <property type="entry name" value="EFG_IV"/>
    <property type="match status" value="1"/>
</dbReference>
<dbReference type="SUPFAM" id="SSF54980">
    <property type="entry name" value="EF-G C-terminal domain-like"/>
    <property type="match status" value="2"/>
</dbReference>
<dbReference type="SUPFAM" id="SSF52540">
    <property type="entry name" value="P-loop containing nucleoside triphosphate hydrolases"/>
    <property type="match status" value="1"/>
</dbReference>
<dbReference type="SUPFAM" id="SSF54211">
    <property type="entry name" value="Ribosomal protein S5 domain 2-like"/>
    <property type="match status" value="1"/>
</dbReference>
<dbReference type="SUPFAM" id="SSF50447">
    <property type="entry name" value="Translation proteins"/>
    <property type="match status" value="1"/>
</dbReference>
<dbReference type="PROSITE" id="PS00301">
    <property type="entry name" value="G_TR_1"/>
    <property type="match status" value="1"/>
</dbReference>
<dbReference type="PROSITE" id="PS51722">
    <property type="entry name" value="G_TR_2"/>
    <property type="match status" value="1"/>
</dbReference>
<feature type="chain" id="PRO_0000091082" description="Elongation factor G 1">
    <location>
        <begin position="1"/>
        <end position="693"/>
    </location>
</feature>
<feature type="domain" description="tr-type G">
    <location>
        <begin position="4"/>
        <end position="281"/>
    </location>
</feature>
<feature type="binding site" evidence="1">
    <location>
        <begin position="13"/>
        <end position="20"/>
    </location>
    <ligand>
        <name>GTP</name>
        <dbReference type="ChEBI" id="CHEBI:37565"/>
    </ligand>
</feature>
<feature type="binding site" evidence="1">
    <location>
        <begin position="80"/>
        <end position="84"/>
    </location>
    <ligand>
        <name>GTP</name>
        <dbReference type="ChEBI" id="CHEBI:37565"/>
    </ligand>
</feature>
<feature type="binding site" evidence="1">
    <location>
        <begin position="134"/>
        <end position="137"/>
    </location>
    <ligand>
        <name>GTP</name>
        <dbReference type="ChEBI" id="CHEBI:37565"/>
    </ligand>
</feature>
<gene>
    <name evidence="1" type="primary">fusA1</name>
    <name type="synonym">fus-1</name>
    <name type="ordered locus">BG0550</name>
</gene>
<sequence>MDYNKLRNIGISAHIDSGKTTLTERILFYCNKIHAIHEVKGKDGVGATMDSMELERERGITIASAATHVEWKDFPINIIDTPGHVDFTIEVERSLRVLDGAILVLDSVAGVQSQSITVDRQLKRYSVPRLAFVNKCDKTGANPYNVRDQLRSKLDLNSVLMQIPIGLEDKHIGVIDLVLMKAYYFEGKDGTEIIEKEIPSDLLGEAKKKREIMLDALADFNDELMELHMEGKDVPIEIICNAIRTGTLALKLCPVFMGSAYKNKGVQLLLDAVTRFLPSPHDIKNTALDINNNEKEIDLKIDNDLPTVALAFKLEDGQYGQLTYVRIYQGTLRKGQELINSRTSKKFKVGRLIRMHANNTEDIEFGGSGDIVALFGIECASGDTFCDPSINYSMTSMFIPDPVISLSVKPKDKKSADNMAKALGRFTKEDPTFKTYVDIESNETIIQGMGELHLEVYIERMKREFKAEVETGMPQVAYRETITGKAEFNYTHKKQSGGAGQFGRVAGFMEPLNKEGETYEFVNLIKGGVIPTEYIPSCDKGFQKAMEKGTLIGFPIVDIKITINDGQYHIVDSSDIAFQLAAIGAFREAYEKAKPTILEPIMKVTLEGPTEFQGNMFGLLNQRRGIITGSLEDGSFSKVEAEVPLSEMFGFSTVLRSSTQGKAEFSMEFLKYGKVPNAIFDELRKKFNDQNKS</sequence>
<proteinExistence type="inferred from homology"/>
<evidence type="ECO:0000255" key="1">
    <source>
        <dbReference type="HAMAP-Rule" id="MF_00054"/>
    </source>
</evidence>
<name>EFG1_BORGP</name>